<dbReference type="EC" id="3.5.4.16" evidence="1"/>
<dbReference type="EMBL" id="CP001139">
    <property type="protein sequence ID" value="ACH66674.1"/>
    <property type="molecule type" value="Genomic_DNA"/>
</dbReference>
<dbReference type="RefSeq" id="WP_005419880.1">
    <property type="nucleotide sequence ID" value="NC_011184.1"/>
</dbReference>
<dbReference type="SMR" id="B5FF36"/>
<dbReference type="GeneID" id="54164293"/>
<dbReference type="KEGG" id="vfm:VFMJ11_1717"/>
<dbReference type="HOGENOM" id="CLU_049768_3_2_6"/>
<dbReference type="UniPathway" id="UPA00848">
    <property type="reaction ID" value="UER00151"/>
</dbReference>
<dbReference type="Proteomes" id="UP000001857">
    <property type="component" value="Chromosome I"/>
</dbReference>
<dbReference type="GO" id="GO:0005737">
    <property type="term" value="C:cytoplasm"/>
    <property type="evidence" value="ECO:0007669"/>
    <property type="project" value="TreeGrafter"/>
</dbReference>
<dbReference type="GO" id="GO:0005525">
    <property type="term" value="F:GTP binding"/>
    <property type="evidence" value="ECO:0007669"/>
    <property type="project" value="UniProtKB-KW"/>
</dbReference>
<dbReference type="GO" id="GO:0003934">
    <property type="term" value="F:GTP cyclohydrolase I activity"/>
    <property type="evidence" value="ECO:0007669"/>
    <property type="project" value="UniProtKB-UniRule"/>
</dbReference>
<dbReference type="GO" id="GO:0008270">
    <property type="term" value="F:zinc ion binding"/>
    <property type="evidence" value="ECO:0007669"/>
    <property type="project" value="UniProtKB-UniRule"/>
</dbReference>
<dbReference type="GO" id="GO:0006730">
    <property type="term" value="P:one-carbon metabolic process"/>
    <property type="evidence" value="ECO:0007669"/>
    <property type="project" value="UniProtKB-UniRule"/>
</dbReference>
<dbReference type="GO" id="GO:0006729">
    <property type="term" value="P:tetrahydrobiopterin biosynthetic process"/>
    <property type="evidence" value="ECO:0007669"/>
    <property type="project" value="TreeGrafter"/>
</dbReference>
<dbReference type="GO" id="GO:0046654">
    <property type="term" value="P:tetrahydrofolate biosynthetic process"/>
    <property type="evidence" value="ECO:0007669"/>
    <property type="project" value="UniProtKB-UniRule"/>
</dbReference>
<dbReference type="FunFam" id="1.10.286.10:FF:000002">
    <property type="entry name" value="GTP cyclohydrolase 1"/>
    <property type="match status" value="1"/>
</dbReference>
<dbReference type="FunFam" id="3.30.1130.10:FF:000001">
    <property type="entry name" value="GTP cyclohydrolase 1"/>
    <property type="match status" value="1"/>
</dbReference>
<dbReference type="Gene3D" id="1.10.286.10">
    <property type="match status" value="1"/>
</dbReference>
<dbReference type="Gene3D" id="3.30.1130.10">
    <property type="match status" value="1"/>
</dbReference>
<dbReference type="HAMAP" id="MF_00223">
    <property type="entry name" value="FolE"/>
    <property type="match status" value="1"/>
</dbReference>
<dbReference type="InterPro" id="IPR043133">
    <property type="entry name" value="GTP-CH-I_C/QueF"/>
</dbReference>
<dbReference type="InterPro" id="IPR043134">
    <property type="entry name" value="GTP-CH-I_N"/>
</dbReference>
<dbReference type="InterPro" id="IPR001474">
    <property type="entry name" value="GTP_CycHdrlase_I"/>
</dbReference>
<dbReference type="InterPro" id="IPR018234">
    <property type="entry name" value="GTP_CycHdrlase_I_CS"/>
</dbReference>
<dbReference type="InterPro" id="IPR020602">
    <property type="entry name" value="GTP_CycHdrlase_I_dom"/>
</dbReference>
<dbReference type="NCBIfam" id="TIGR00063">
    <property type="entry name" value="folE"/>
    <property type="match status" value="1"/>
</dbReference>
<dbReference type="NCBIfam" id="NF006824">
    <property type="entry name" value="PRK09347.1-1"/>
    <property type="match status" value="1"/>
</dbReference>
<dbReference type="NCBIfam" id="NF006825">
    <property type="entry name" value="PRK09347.1-2"/>
    <property type="match status" value="1"/>
</dbReference>
<dbReference type="NCBIfam" id="NF006826">
    <property type="entry name" value="PRK09347.1-3"/>
    <property type="match status" value="1"/>
</dbReference>
<dbReference type="PANTHER" id="PTHR11109:SF7">
    <property type="entry name" value="GTP CYCLOHYDROLASE 1"/>
    <property type="match status" value="1"/>
</dbReference>
<dbReference type="PANTHER" id="PTHR11109">
    <property type="entry name" value="GTP CYCLOHYDROLASE I"/>
    <property type="match status" value="1"/>
</dbReference>
<dbReference type="Pfam" id="PF01227">
    <property type="entry name" value="GTP_cyclohydroI"/>
    <property type="match status" value="1"/>
</dbReference>
<dbReference type="SUPFAM" id="SSF55620">
    <property type="entry name" value="Tetrahydrobiopterin biosynthesis enzymes-like"/>
    <property type="match status" value="1"/>
</dbReference>
<dbReference type="PROSITE" id="PS00859">
    <property type="entry name" value="GTP_CYCLOHYDROL_1_1"/>
    <property type="match status" value="1"/>
</dbReference>
<dbReference type="PROSITE" id="PS00860">
    <property type="entry name" value="GTP_CYCLOHYDROL_1_2"/>
    <property type="match status" value="1"/>
</dbReference>
<keyword id="KW-0342">GTP-binding</keyword>
<keyword id="KW-0378">Hydrolase</keyword>
<keyword id="KW-0479">Metal-binding</keyword>
<keyword id="KW-0547">Nucleotide-binding</keyword>
<keyword id="KW-0554">One-carbon metabolism</keyword>
<keyword id="KW-0862">Zinc</keyword>
<organism>
    <name type="scientific">Aliivibrio fischeri (strain MJ11)</name>
    <name type="common">Vibrio fischeri</name>
    <dbReference type="NCBI Taxonomy" id="388396"/>
    <lineage>
        <taxon>Bacteria</taxon>
        <taxon>Pseudomonadati</taxon>
        <taxon>Pseudomonadota</taxon>
        <taxon>Gammaproteobacteria</taxon>
        <taxon>Vibrionales</taxon>
        <taxon>Vibrionaceae</taxon>
        <taxon>Aliivibrio</taxon>
    </lineage>
</organism>
<comment type="catalytic activity">
    <reaction evidence="1">
        <text>GTP + H2O = 7,8-dihydroneopterin 3'-triphosphate + formate + H(+)</text>
        <dbReference type="Rhea" id="RHEA:17473"/>
        <dbReference type="ChEBI" id="CHEBI:15377"/>
        <dbReference type="ChEBI" id="CHEBI:15378"/>
        <dbReference type="ChEBI" id="CHEBI:15740"/>
        <dbReference type="ChEBI" id="CHEBI:37565"/>
        <dbReference type="ChEBI" id="CHEBI:58462"/>
        <dbReference type="EC" id="3.5.4.16"/>
    </reaction>
</comment>
<comment type="pathway">
    <text evidence="1">Cofactor biosynthesis; 7,8-dihydroneopterin triphosphate biosynthesis; 7,8-dihydroneopterin triphosphate from GTP: step 1/1.</text>
</comment>
<comment type="subunit">
    <text evidence="1">Homomer.</text>
</comment>
<comment type="similarity">
    <text evidence="1">Belongs to the GTP cyclohydrolase I family.</text>
</comment>
<protein>
    <recommendedName>
        <fullName evidence="1">GTP cyclohydrolase 1</fullName>
        <ecNumber evidence="1">3.5.4.16</ecNumber>
    </recommendedName>
    <alternativeName>
        <fullName evidence="1">GTP cyclohydrolase I</fullName>
        <shortName evidence="1">GTP-CH-I</shortName>
    </alternativeName>
</protein>
<gene>
    <name evidence="1" type="primary">folE</name>
    <name type="ordered locus">VFMJ11_1717</name>
</gene>
<name>GCH1_ALIFM</name>
<evidence type="ECO:0000255" key="1">
    <source>
        <dbReference type="HAMAP-Rule" id="MF_00223"/>
    </source>
</evidence>
<accession>B5FF36</accession>
<proteinExistence type="inferred from homology"/>
<feature type="chain" id="PRO_1000100209" description="GTP cyclohydrolase 1">
    <location>
        <begin position="1"/>
        <end position="217"/>
    </location>
</feature>
<feature type="binding site" evidence="1">
    <location>
        <position position="109"/>
    </location>
    <ligand>
        <name>Zn(2+)</name>
        <dbReference type="ChEBI" id="CHEBI:29105"/>
    </ligand>
</feature>
<feature type="binding site" evidence="1">
    <location>
        <position position="112"/>
    </location>
    <ligand>
        <name>Zn(2+)</name>
        <dbReference type="ChEBI" id="CHEBI:29105"/>
    </ligand>
</feature>
<feature type="binding site" evidence="1">
    <location>
        <position position="180"/>
    </location>
    <ligand>
        <name>Zn(2+)</name>
        <dbReference type="ChEBI" id="CHEBI:29105"/>
    </ligand>
</feature>
<sequence length="217" mass="24355">MSSLSESAILVRDALVARGLETPMKENGVSREEKKERIEEHMREILTLLSLDLSDDSLEETPHRIAKMYVDEIFSGLDYANFPKITVIENKMNCDEMVRVNDITLTSTCEHHLVTIDGKATVAYIPRGKIIGLSKINRIVRFFAQRPQVQERMTQQILVALQTLLGSDDVAITMEATHYCVKSRGVMDATSSTTTTALGGIFKRNPATRHEFLSGIR</sequence>
<reference key="1">
    <citation type="submission" date="2008-08" db="EMBL/GenBank/DDBJ databases">
        <title>Complete sequence of Vibrio fischeri strain MJ11.</title>
        <authorList>
            <person name="Mandel M.J."/>
            <person name="Stabb E.V."/>
            <person name="Ruby E.G."/>
            <person name="Ferriera S."/>
            <person name="Johnson J."/>
            <person name="Kravitz S."/>
            <person name="Beeson K."/>
            <person name="Sutton G."/>
            <person name="Rogers Y.-H."/>
            <person name="Friedman R."/>
            <person name="Frazier M."/>
            <person name="Venter J.C."/>
        </authorList>
    </citation>
    <scope>NUCLEOTIDE SEQUENCE [LARGE SCALE GENOMIC DNA]</scope>
    <source>
        <strain>MJ11</strain>
    </source>
</reference>